<dbReference type="EMBL" id="AE000782">
    <property type="protein sequence ID" value="AAB89129.1"/>
    <property type="molecule type" value="Genomic_DNA"/>
</dbReference>
<dbReference type="PIR" id="B69516">
    <property type="entry name" value="B69516"/>
</dbReference>
<dbReference type="PaxDb" id="224325-AF_2130"/>
<dbReference type="EnsemblBacteria" id="AAB89129">
    <property type="protein sequence ID" value="AAB89129"/>
    <property type="gene ID" value="AF_2130"/>
</dbReference>
<dbReference type="KEGG" id="afu:AF_2130"/>
<dbReference type="HOGENOM" id="CLU_2313624_0_0_2"/>
<dbReference type="Proteomes" id="UP000002199">
    <property type="component" value="Chromosome"/>
</dbReference>
<dbReference type="GO" id="GO:0005886">
    <property type="term" value="C:plasma membrane"/>
    <property type="evidence" value="ECO:0007669"/>
    <property type="project" value="UniProtKB-SubCell"/>
</dbReference>
<gene>
    <name type="ordered locus">AF_2130</name>
</gene>
<keyword id="KW-1003">Cell membrane</keyword>
<keyword id="KW-0472">Membrane</keyword>
<keyword id="KW-1185">Reference proteome</keyword>
<keyword id="KW-0812">Transmembrane</keyword>
<keyword id="KW-1133">Transmembrane helix</keyword>
<name>Y2130_ARCFU</name>
<protein>
    <recommendedName>
        <fullName>Uncharacterized protein AF_2130</fullName>
    </recommendedName>
</protein>
<organism>
    <name type="scientific">Archaeoglobus fulgidus (strain ATCC 49558 / DSM 4304 / JCM 9628 / NBRC 100126 / VC-16)</name>
    <dbReference type="NCBI Taxonomy" id="224325"/>
    <lineage>
        <taxon>Archaea</taxon>
        <taxon>Methanobacteriati</taxon>
        <taxon>Methanobacteriota</taxon>
        <taxon>Archaeoglobi</taxon>
        <taxon>Archaeoglobales</taxon>
        <taxon>Archaeoglobaceae</taxon>
        <taxon>Archaeoglobus</taxon>
    </lineage>
</organism>
<proteinExistence type="predicted"/>
<evidence type="ECO:0000255" key="1"/>
<evidence type="ECO:0000305" key="2"/>
<reference key="1">
    <citation type="journal article" date="1997" name="Nature">
        <title>The complete genome sequence of the hyperthermophilic, sulphate-reducing archaeon Archaeoglobus fulgidus.</title>
        <authorList>
            <person name="Klenk H.-P."/>
            <person name="Clayton R.A."/>
            <person name="Tomb J.-F."/>
            <person name="White O."/>
            <person name="Nelson K.E."/>
            <person name="Ketchum K.A."/>
            <person name="Dodson R.J."/>
            <person name="Gwinn M.L."/>
            <person name="Hickey E.K."/>
            <person name="Peterson J.D."/>
            <person name="Richardson D.L."/>
            <person name="Kerlavage A.R."/>
            <person name="Graham D.E."/>
            <person name="Kyrpides N.C."/>
            <person name="Fleischmann R.D."/>
            <person name="Quackenbush J."/>
            <person name="Lee N.H."/>
            <person name="Sutton G.G."/>
            <person name="Gill S.R."/>
            <person name="Kirkness E.F."/>
            <person name="Dougherty B.A."/>
            <person name="McKenney K."/>
            <person name="Adams M.D."/>
            <person name="Loftus B.J."/>
            <person name="Peterson S.N."/>
            <person name="Reich C.I."/>
            <person name="McNeil L.K."/>
            <person name="Badger J.H."/>
            <person name="Glodek A."/>
            <person name="Zhou L."/>
            <person name="Overbeek R."/>
            <person name="Gocayne J.D."/>
            <person name="Weidman J.F."/>
            <person name="McDonald L.A."/>
            <person name="Utterback T.R."/>
            <person name="Cotton M.D."/>
            <person name="Spriggs T."/>
            <person name="Artiach P."/>
            <person name="Kaine B.P."/>
            <person name="Sykes S.M."/>
            <person name="Sadow P.W."/>
            <person name="D'Andrea K.P."/>
            <person name="Bowman C."/>
            <person name="Fujii C."/>
            <person name="Garland S.A."/>
            <person name="Mason T.M."/>
            <person name="Olsen G.J."/>
            <person name="Fraser C.M."/>
            <person name="Smith H.O."/>
            <person name="Woese C.R."/>
            <person name="Venter J.C."/>
        </authorList>
    </citation>
    <scope>NUCLEOTIDE SEQUENCE [LARGE SCALE GENOMIC DNA]</scope>
    <source>
        <strain>ATCC 49558 / DSM 4304 / JCM 9628 / NBRC 100126 / VC-16</strain>
    </source>
</reference>
<sequence>MDATTNFFISYFLPLISFLGLLNLLYTLYSRSRMDRLRFISSSVVSIFTILFGTMPYARYNRLLGESFCNLMVFVLPVSFFLVSLLLWLLRNKYVSELK</sequence>
<feature type="chain" id="PRO_0000128097" description="Uncharacterized protein AF_2130">
    <location>
        <begin position="1"/>
        <end position="99"/>
    </location>
</feature>
<feature type="transmembrane region" description="Helical" evidence="1">
    <location>
        <begin position="7"/>
        <end position="29"/>
    </location>
</feature>
<feature type="transmembrane region" description="Helical" evidence="1">
    <location>
        <begin position="39"/>
        <end position="61"/>
    </location>
</feature>
<feature type="transmembrane region" description="Helical" evidence="1">
    <location>
        <begin position="68"/>
        <end position="90"/>
    </location>
</feature>
<accession>O28150</accession>
<comment type="subcellular location">
    <subcellularLocation>
        <location evidence="2">Cell membrane</location>
        <topology evidence="2">Multi-pass membrane protein</topology>
    </subcellularLocation>
</comment>